<organism>
    <name type="scientific">Staphylococcus aureus (strain COL)</name>
    <dbReference type="NCBI Taxonomy" id="93062"/>
    <lineage>
        <taxon>Bacteria</taxon>
        <taxon>Bacillati</taxon>
        <taxon>Bacillota</taxon>
        <taxon>Bacilli</taxon>
        <taxon>Bacillales</taxon>
        <taxon>Staphylococcaceae</taxon>
        <taxon>Staphylococcus</taxon>
    </lineage>
</organism>
<accession>Q5HJT5</accession>
<feature type="chain" id="PRO_0000162142" description="Probable tRNA-dihydrouridine synthase">
    <location>
        <begin position="1"/>
        <end position="328"/>
    </location>
</feature>
<feature type="active site" description="Proton donor" evidence="2">
    <location>
        <position position="105"/>
    </location>
</feature>
<feature type="binding site" evidence="1">
    <location>
        <begin position="18"/>
        <end position="20"/>
    </location>
    <ligand>
        <name>FMN</name>
        <dbReference type="ChEBI" id="CHEBI:58210"/>
    </ligand>
</feature>
<feature type="binding site" evidence="1">
    <location>
        <position position="143"/>
    </location>
    <ligand>
        <name>FMN</name>
        <dbReference type="ChEBI" id="CHEBI:58210"/>
    </ligand>
</feature>
<feature type="binding site" evidence="1">
    <location>
        <begin position="208"/>
        <end position="210"/>
    </location>
    <ligand>
        <name>FMN</name>
        <dbReference type="ChEBI" id="CHEBI:58210"/>
    </ligand>
</feature>
<feature type="binding site" evidence="1">
    <location>
        <begin position="232"/>
        <end position="233"/>
    </location>
    <ligand>
        <name>FMN</name>
        <dbReference type="ChEBI" id="CHEBI:58210"/>
    </ligand>
</feature>
<name>DUS_STAAC</name>
<comment type="function">
    <text evidence="1">Catalyzes the synthesis of 5,6-dihydrouridine (D), a modified base found in the D-loop of most tRNAs, via the reduction of the C5-C6 double bond in target uridines.</text>
</comment>
<comment type="catalytic activity">
    <reaction evidence="1">
        <text>a 5,6-dihydrouridine in tRNA + NAD(+) = a uridine in tRNA + NADH + H(+)</text>
        <dbReference type="Rhea" id="RHEA:54452"/>
        <dbReference type="Rhea" id="RHEA-COMP:13339"/>
        <dbReference type="Rhea" id="RHEA-COMP:13887"/>
        <dbReference type="ChEBI" id="CHEBI:15378"/>
        <dbReference type="ChEBI" id="CHEBI:57540"/>
        <dbReference type="ChEBI" id="CHEBI:57945"/>
        <dbReference type="ChEBI" id="CHEBI:65315"/>
        <dbReference type="ChEBI" id="CHEBI:74443"/>
    </reaction>
</comment>
<comment type="catalytic activity">
    <reaction evidence="1">
        <text>a 5,6-dihydrouridine in tRNA + NADP(+) = a uridine in tRNA + NADPH + H(+)</text>
        <dbReference type="Rhea" id="RHEA:23624"/>
        <dbReference type="Rhea" id="RHEA-COMP:13339"/>
        <dbReference type="Rhea" id="RHEA-COMP:13887"/>
        <dbReference type="ChEBI" id="CHEBI:15378"/>
        <dbReference type="ChEBI" id="CHEBI:57783"/>
        <dbReference type="ChEBI" id="CHEBI:58349"/>
        <dbReference type="ChEBI" id="CHEBI:65315"/>
        <dbReference type="ChEBI" id="CHEBI:74443"/>
    </reaction>
</comment>
<comment type="cofactor">
    <cofactor evidence="1">
        <name>FMN</name>
        <dbReference type="ChEBI" id="CHEBI:58210"/>
    </cofactor>
</comment>
<comment type="similarity">
    <text evidence="3">Belongs to the Dus family.</text>
</comment>
<comment type="sequence caution" evidence="3">
    <conflict type="erroneous initiation">
        <sequence resource="EMBL-CDS" id="AAW38711"/>
    </conflict>
</comment>
<evidence type="ECO:0000250" key="1">
    <source>
        <dbReference type="UniProtKB" id="P33371"/>
    </source>
</evidence>
<evidence type="ECO:0000250" key="2">
    <source>
        <dbReference type="UniProtKB" id="Q5SMC7"/>
    </source>
</evidence>
<evidence type="ECO:0000305" key="3"/>
<protein>
    <recommendedName>
        <fullName>Probable tRNA-dihydrouridine synthase</fullName>
        <ecNumber>1.3.1.-</ecNumber>
    </recommendedName>
</protein>
<gene>
    <name type="primary">dus</name>
    <name type="ordered locus">SACOL0067</name>
</gene>
<proteinExistence type="inferred from homology"/>
<sequence length="328" mass="37767">MKENFWSELPRPFFILAPMEDVTDIVFRHVVSEAARPDVFFTEFTNTESFCHPEGIHSVRGRLTFSEDEQPMVAHIWGDKPEQFRETSIQLAKMGFKGIDLNMGCPVANVAKKGKGSGLILRPDVAAEIIQATKAGGLPVSVKTRLGYYEIDEWKDWLKHVFEQDIANLSIHLRTRKEMSKVDAHWELIEAIKNLRDEIAPNTLLTINGDIPDRKTGLELAEKYGIDGVMIGRGIFHNPFAFEKEPREHTSKELLDLLRLHLSLFNKYEKDEIRQFKSLRRFFKIYVRGIRGASELRHQLMNTQSIAEARALLDEFEAQMDEDVKIEL</sequence>
<keyword id="KW-0285">Flavoprotein</keyword>
<keyword id="KW-0288">FMN</keyword>
<keyword id="KW-0521">NADP</keyword>
<keyword id="KW-0560">Oxidoreductase</keyword>
<keyword id="KW-0694">RNA-binding</keyword>
<keyword id="KW-0819">tRNA processing</keyword>
<keyword id="KW-0820">tRNA-binding</keyword>
<dbReference type="EC" id="1.3.1.-"/>
<dbReference type="EMBL" id="CP000046">
    <property type="protein sequence ID" value="AAW38711.1"/>
    <property type="status" value="ALT_INIT"/>
    <property type="molecule type" value="Genomic_DNA"/>
</dbReference>
<dbReference type="RefSeq" id="WP_000662031.1">
    <property type="nucleotide sequence ID" value="NZ_JBGOFO010000001.1"/>
</dbReference>
<dbReference type="SMR" id="Q5HJT5"/>
<dbReference type="KEGG" id="sac:SACOL0067"/>
<dbReference type="HOGENOM" id="CLU_013299_0_3_9"/>
<dbReference type="Proteomes" id="UP000000530">
    <property type="component" value="Chromosome"/>
</dbReference>
<dbReference type="GO" id="GO:0050660">
    <property type="term" value="F:flavin adenine dinucleotide binding"/>
    <property type="evidence" value="ECO:0007669"/>
    <property type="project" value="InterPro"/>
</dbReference>
<dbReference type="GO" id="GO:0000049">
    <property type="term" value="F:tRNA binding"/>
    <property type="evidence" value="ECO:0007669"/>
    <property type="project" value="UniProtKB-KW"/>
</dbReference>
<dbReference type="GO" id="GO:0017150">
    <property type="term" value="F:tRNA dihydrouridine synthase activity"/>
    <property type="evidence" value="ECO:0007669"/>
    <property type="project" value="InterPro"/>
</dbReference>
<dbReference type="CDD" id="cd02801">
    <property type="entry name" value="DUS_like_FMN"/>
    <property type="match status" value="1"/>
</dbReference>
<dbReference type="Gene3D" id="3.20.20.70">
    <property type="entry name" value="Aldolase class I"/>
    <property type="match status" value="1"/>
</dbReference>
<dbReference type="Gene3D" id="1.10.1200.80">
    <property type="entry name" value="Putative flavin oxidoreducatase, domain 2"/>
    <property type="match status" value="1"/>
</dbReference>
<dbReference type="InterPro" id="IPR013785">
    <property type="entry name" value="Aldolase_TIM"/>
</dbReference>
<dbReference type="InterPro" id="IPR035587">
    <property type="entry name" value="DUS-like_FMN-bd"/>
</dbReference>
<dbReference type="InterPro" id="IPR001269">
    <property type="entry name" value="DUS_fam"/>
</dbReference>
<dbReference type="InterPro" id="IPR024036">
    <property type="entry name" value="tRNA-dHydroUridine_Synthase_C"/>
</dbReference>
<dbReference type="InterPro" id="IPR018517">
    <property type="entry name" value="tRNA_hU_synthase_CS"/>
</dbReference>
<dbReference type="PANTHER" id="PTHR11082:SF25">
    <property type="entry name" value="DUS-LIKE FMN-BINDING DOMAIN-CONTAINING PROTEIN"/>
    <property type="match status" value="1"/>
</dbReference>
<dbReference type="PANTHER" id="PTHR11082">
    <property type="entry name" value="TRNA-DIHYDROURIDINE SYNTHASE"/>
    <property type="match status" value="1"/>
</dbReference>
<dbReference type="Pfam" id="PF01207">
    <property type="entry name" value="Dus"/>
    <property type="match status" value="1"/>
</dbReference>
<dbReference type="PIRSF" id="PIRSF006621">
    <property type="entry name" value="Dus"/>
    <property type="match status" value="1"/>
</dbReference>
<dbReference type="SUPFAM" id="SSF51395">
    <property type="entry name" value="FMN-linked oxidoreductases"/>
    <property type="match status" value="1"/>
</dbReference>
<dbReference type="PROSITE" id="PS01136">
    <property type="entry name" value="UPF0034"/>
    <property type="match status" value="1"/>
</dbReference>
<reference key="1">
    <citation type="journal article" date="2005" name="J. Bacteriol.">
        <title>Insights on evolution of virulence and resistance from the complete genome analysis of an early methicillin-resistant Staphylococcus aureus strain and a biofilm-producing methicillin-resistant Staphylococcus epidermidis strain.</title>
        <authorList>
            <person name="Gill S.R."/>
            <person name="Fouts D.E."/>
            <person name="Archer G.L."/>
            <person name="Mongodin E.F."/>
            <person name="DeBoy R.T."/>
            <person name="Ravel J."/>
            <person name="Paulsen I.T."/>
            <person name="Kolonay J.F."/>
            <person name="Brinkac L.M."/>
            <person name="Beanan M.J."/>
            <person name="Dodson R.J."/>
            <person name="Daugherty S.C."/>
            <person name="Madupu R."/>
            <person name="Angiuoli S.V."/>
            <person name="Durkin A.S."/>
            <person name="Haft D.H."/>
            <person name="Vamathevan J.J."/>
            <person name="Khouri H."/>
            <person name="Utterback T.R."/>
            <person name="Lee C."/>
            <person name="Dimitrov G."/>
            <person name="Jiang L."/>
            <person name="Qin H."/>
            <person name="Weidman J."/>
            <person name="Tran K."/>
            <person name="Kang K.H."/>
            <person name="Hance I.R."/>
            <person name="Nelson K.E."/>
            <person name="Fraser C.M."/>
        </authorList>
    </citation>
    <scope>NUCLEOTIDE SEQUENCE [LARGE SCALE GENOMIC DNA]</scope>
    <source>
        <strain>COL</strain>
    </source>
</reference>